<comment type="function">
    <text evidence="1">Catalyzes the acyloin condensation reaction between C atoms 2 and 3 of pyruvate and glyceraldehyde 3-phosphate to yield 1-deoxy-D-xylulose-5-phosphate (DXP).</text>
</comment>
<comment type="catalytic activity">
    <reaction evidence="1">
        <text>D-glyceraldehyde 3-phosphate + pyruvate + H(+) = 1-deoxy-D-xylulose 5-phosphate + CO2</text>
        <dbReference type="Rhea" id="RHEA:12605"/>
        <dbReference type="ChEBI" id="CHEBI:15361"/>
        <dbReference type="ChEBI" id="CHEBI:15378"/>
        <dbReference type="ChEBI" id="CHEBI:16526"/>
        <dbReference type="ChEBI" id="CHEBI:57792"/>
        <dbReference type="ChEBI" id="CHEBI:59776"/>
        <dbReference type="EC" id="2.2.1.7"/>
    </reaction>
</comment>
<comment type="cofactor">
    <cofactor evidence="1">
        <name>Mg(2+)</name>
        <dbReference type="ChEBI" id="CHEBI:18420"/>
    </cofactor>
    <text evidence="1">Binds 1 Mg(2+) ion per subunit.</text>
</comment>
<comment type="cofactor">
    <cofactor evidence="1">
        <name>thiamine diphosphate</name>
        <dbReference type="ChEBI" id="CHEBI:58937"/>
    </cofactor>
    <text evidence="1">Binds 1 thiamine pyrophosphate per subunit.</text>
</comment>
<comment type="pathway">
    <text evidence="1">Metabolic intermediate biosynthesis; 1-deoxy-D-xylulose 5-phosphate biosynthesis; 1-deoxy-D-xylulose 5-phosphate from D-glyceraldehyde 3-phosphate and pyruvate: step 1/1.</text>
</comment>
<comment type="subunit">
    <text evidence="1">Homodimer.</text>
</comment>
<comment type="similarity">
    <text evidence="1">Belongs to the transketolase family. DXPS subfamily.</text>
</comment>
<sequence>MTPPPATGKPSSSLLDRVSSPADIRDFSIEELEQLTYEVRQEMIQSVSFTGGHLGAGLGVAELTVALHHIFDTPRDRLIWDVGHQAYPHKILTGRRGRMRTMRQGGGLSGFTRRSESEYDPFGAGHSSTSISAALGMAVARDLKGATNNVIAVIGDGAMSAGQAYEAMNNAGAAGSRLIVILNDNDMSIAPPVGALSAHLSRLLSSPSYHSLRHLVKDLAHLLPPSLERAVGRAEEYARGMVSGGGTLFEELGFYYVGPIDGHNFEHLLPVLKNLRDSDDTKPVMLHVVTKKGRGYPPAEAAADKYHGVGRFDVLTGQLEKPKANAPSYTSVFAKALIAEAEVDDRVVAITAAMPGGTGLDKFGDRFPARTFDVGIAEQHAVTFAGGLATEGFKPFCAIYSSFLQRAYDQVQHDVVLQKLPVRFAIDRAGLVGADGATHAGSYDMAFLGCLPDIVIMCPSDEADLMHAVATAVSIDDRPSAFRYPRGEGVGIELSERGSVMPIGKGRVVREGNRVAILSLGTRLAEALKAADELAARGLAPTVVDARFMKPLDEELILRLAREHEVLITVEEGSVGGFGSHVLHLLASKGALDNGLKVRPLALPDVFVEHDAPAIQYEKIGLNASGIVATVLATLGEARSVVSA</sequence>
<feature type="chain" id="PRO_0000256434" description="1-deoxy-D-xylulose-5-phosphate synthase">
    <location>
        <begin position="1"/>
        <end position="644"/>
    </location>
</feature>
<feature type="binding site" evidence="1">
    <location>
        <position position="84"/>
    </location>
    <ligand>
        <name>thiamine diphosphate</name>
        <dbReference type="ChEBI" id="CHEBI:58937"/>
    </ligand>
</feature>
<feature type="binding site" evidence="1">
    <location>
        <begin position="125"/>
        <end position="127"/>
    </location>
    <ligand>
        <name>thiamine diphosphate</name>
        <dbReference type="ChEBI" id="CHEBI:58937"/>
    </ligand>
</feature>
<feature type="binding site" evidence="1">
    <location>
        <position position="156"/>
    </location>
    <ligand>
        <name>Mg(2+)</name>
        <dbReference type="ChEBI" id="CHEBI:18420"/>
    </ligand>
</feature>
<feature type="binding site" evidence="1">
    <location>
        <begin position="157"/>
        <end position="158"/>
    </location>
    <ligand>
        <name>thiamine diphosphate</name>
        <dbReference type="ChEBI" id="CHEBI:58937"/>
    </ligand>
</feature>
<feature type="binding site" evidence="1">
    <location>
        <position position="185"/>
    </location>
    <ligand>
        <name>Mg(2+)</name>
        <dbReference type="ChEBI" id="CHEBI:18420"/>
    </ligand>
</feature>
<feature type="binding site" evidence="1">
    <location>
        <position position="185"/>
    </location>
    <ligand>
        <name>thiamine diphosphate</name>
        <dbReference type="ChEBI" id="CHEBI:58937"/>
    </ligand>
</feature>
<feature type="binding site" evidence="1">
    <location>
        <position position="296"/>
    </location>
    <ligand>
        <name>thiamine diphosphate</name>
        <dbReference type="ChEBI" id="CHEBI:58937"/>
    </ligand>
</feature>
<feature type="binding site" evidence="1">
    <location>
        <position position="378"/>
    </location>
    <ligand>
        <name>thiamine diphosphate</name>
        <dbReference type="ChEBI" id="CHEBI:58937"/>
    </ligand>
</feature>
<evidence type="ECO:0000255" key="1">
    <source>
        <dbReference type="HAMAP-Rule" id="MF_00315"/>
    </source>
</evidence>
<keyword id="KW-0414">Isoprene biosynthesis</keyword>
<keyword id="KW-0460">Magnesium</keyword>
<keyword id="KW-0479">Metal-binding</keyword>
<keyword id="KW-0784">Thiamine biosynthesis</keyword>
<keyword id="KW-0786">Thiamine pyrophosphate</keyword>
<keyword id="KW-0808">Transferase</keyword>
<protein>
    <recommendedName>
        <fullName evidence="1">1-deoxy-D-xylulose-5-phosphate synthase</fullName>
        <ecNumber evidence="1">2.2.1.7</ecNumber>
    </recommendedName>
    <alternativeName>
        <fullName evidence="1">1-deoxyxylulose-5-phosphate synthase</fullName>
        <shortName evidence="1">DXP synthase</shortName>
        <shortName evidence="1">DXPS</shortName>
    </alternativeName>
</protein>
<dbReference type="EC" id="2.2.1.7" evidence="1"/>
<dbReference type="EMBL" id="AP007255">
    <property type="protein sequence ID" value="BAE51708.1"/>
    <property type="molecule type" value="Genomic_DNA"/>
</dbReference>
<dbReference type="RefSeq" id="WP_011385281.1">
    <property type="nucleotide sequence ID" value="NC_007626.1"/>
</dbReference>
<dbReference type="SMR" id="Q2W367"/>
<dbReference type="STRING" id="342108.amb2904"/>
<dbReference type="KEGG" id="mag:amb2904"/>
<dbReference type="HOGENOM" id="CLU_009227_1_4_5"/>
<dbReference type="OrthoDB" id="9803371at2"/>
<dbReference type="UniPathway" id="UPA00064">
    <property type="reaction ID" value="UER00091"/>
</dbReference>
<dbReference type="Proteomes" id="UP000007058">
    <property type="component" value="Chromosome"/>
</dbReference>
<dbReference type="GO" id="GO:0008661">
    <property type="term" value="F:1-deoxy-D-xylulose-5-phosphate synthase activity"/>
    <property type="evidence" value="ECO:0007669"/>
    <property type="project" value="UniProtKB-UniRule"/>
</dbReference>
<dbReference type="GO" id="GO:0000287">
    <property type="term" value="F:magnesium ion binding"/>
    <property type="evidence" value="ECO:0007669"/>
    <property type="project" value="UniProtKB-UniRule"/>
</dbReference>
<dbReference type="GO" id="GO:0030976">
    <property type="term" value="F:thiamine pyrophosphate binding"/>
    <property type="evidence" value="ECO:0007669"/>
    <property type="project" value="UniProtKB-UniRule"/>
</dbReference>
<dbReference type="GO" id="GO:0052865">
    <property type="term" value="P:1-deoxy-D-xylulose 5-phosphate biosynthetic process"/>
    <property type="evidence" value="ECO:0007669"/>
    <property type="project" value="UniProtKB-UniPathway"/>
</dbReference>
<dbReference type="GO" id="GO:0019682">
    <property type="term" value="P:glyceraldehyde-3-phosphate metabolic process"/>
    <property type="evidence" value="ECO:0007669"/>
    <property type="project" value="UniProtKB-ARBA"/>
</dbReference>
<dbReference type="GO" id="GO:0016114">
    <property type="term" value="P:terpenoid biosynthetic process"/>
    <property type="evidence" value="ECO:0007669"/>
    <property type="project" value="UniProtKB-UniRule"/>
</dbReference>
<dbReference type="GO" id="GO:0009228">
    <property type="term" value="P:thiamine biosynthetic process"/>
    <property type="evidence" value="ECO:0007669"/>
    <property type="project" value="UniProtKB-UniRule"/>
</dbReference>
<dbReference type="CDD" id="cd02007">
    <property type="entry name" value="TPP_DXS"/>
    <property type="match status" value="1"/>
</dbReference>
<dbReference type="CDD" id="cd07033">
    <property type="entry name" value="TPP_PYR_DXS_TK_like"/>
    <property type="match status" value="1"/>
</dbReference>
<dbReference type="FunFam" id="3.40.50.920:FF:000002">
    <property type="entry name" value="1-deoxy-D-xylulose-5-phosphate synthase"/>
    <property type="match status" value="1"/>
</dbReference>
<dbReference type="FunFam" id="3.40.50.970:FF:000005">
    <property type="entry name" value="1-deoxy-D-xylulose-5-phosphate synthase"/>
    <property type="match status" value="1"/>
</dbReference>
<dbReference type="Gene3D" id="3.40.50.920">
    <property type="match status" value="1"/>
</dbReference>
<dbReference type="Gene3D" id="3.40.50.970">
    <property type="match status" value="2"/>
</dbReference>
<dbReference type="HAMAP" id="MF_00315">
    <property type="entry name" value="DXP_synth"/>
    <property type="match status" value="1"/>
</dbReference>
<dbReference type="InterPro" id="IPR005477">
    <property type="entry name" value="Dxylulose-5-P_synthase"/>
</dbReference>
<dbReference type="InterPro" id="IPR029061">
    <property type="entry name" value="THDP-binding"/>
</dbReference>
<dbReference type="InterPro" id="IPR009014">
    <property type="entry name" value="Transketo_C/PFOR_II"/>
</dbReference>
<dbReference type="InterPro" id="IPR005475">
    <property type="entry name" value="Transketolase-like_Pyr-bd"/>
</dbReference>
<dbReference type="InterPro" id="IPR020826">
    <property type="entry name" value="Transketolase_BS"/>
</dbReference>
<dbReference type="InterPro" id="IPR033248">
    <property type="entry name" value="Transketolase_C"/>
</dbReference>
<dbReference type="InterPro" id="IPR049557">
    <property type="entry name" value="Transketolase_CS"/>
</dbReference>
<dbReference type="NCBIfam" id="TIGR00204">
    <property type="entry name" value="dxs"/>
    <property type="match status" value="1"/>
</dbReference>
<dbReference type="NCBIfam" id="NF003933">
    <property type="entry name" value="PRK05444.2-2"/>
    <property type="match status" value="1"/>
</dbReference>
<dbReference type="PANTHER" id="PTHR43322">
    <property type="entry name" value="1-D-DEOXYXYLULOSE 5-PHOSPHATE SYNTHASE-RELATED"/>
    <property type="match status" value="1"/>
</dbReference>
<dbReference type="PANTHER" id="PTHR43322:SF5">
    <property type="entry name" value="1-DEOXY-D-XYLULOSE-5-PHOSPHATE SYNTHASE, CHLOROPLASTIC"/>
    <property type="match status" value="1"/>
</dbReference>
<dbReference type="Pfam" id="PF13292">
    <property type="entry name" value="DXP_synthase_N"/>
    <property type="match status" value="1"/>
</dbReference>
<dbReference type="Pfam" id="PF02779">
    <property type="entry name" value="Transket_pyr"/>
    <property type="match status" value="1"/>
</dbReference>
<dbReference type="Pfam" id="PF02780">
    <property type="entry name" value="Transketolase_C"/>
    <property type="match status" value="1"/>
</dbReference>
<dbReference type="SMART" id="SM00861">
    <property type="entry name" value="Transket_pyr"/>
    <property type="match status" value="1"/>
</dbReference>
<dbReference type="SUPFAM" id="SSF52518">
    <property type="entry name" value="Thiamin diphosphate-binding fold (THDP-binding)"/>
    <property type="match status" value="2"/>
</dbReference>
<dbReference type="SUPFAM" id="SSF52922">
    <property type="entry name" value="TK C-terminal domain-like"/>
    <property type="match status" value="1"/>
</dbReference>
<dbReference type="PROSITE" id="PS00801">
    <property type="entry name" value="TRANSKETOLASE_1"/>
    <property type="match status" value="1"/>
</dbReference>
<dbReference type="PROSITE" id="PS00802">
    <property type="entry name" value="TRANSKETOLASE_2"/>
    <property type="match status" value="1"/>
</dbReference>
<proteinExistence type="inferred from homology"/>
<gene>
    <name evidence="1" type="primary">dxs</name>
    <name type="ordered locus">amb2904</name>
</gene>
<organism>
    <name type="scientific">Paramagnetospirillum magneticum (strain ATCC 700264 / AMB-1)</name>
    <name type="common">Magnetospirillum magneticum</name>
    <dbReference type="NCBI Taxonomy" id="342108"/>
    <lineage>
        <taxon>Bacteria</taxon>
        <taxon>Pseudomonadati</taxon>
        <taxon>Pseudomonadota</taxon>
        <taxon>Alphaproteobacteria</taxon>
        <taxon>Rhodospirillales</taxon>
        <taxon>Magnetospirillaceae</taxon>
        <taxon>Paramagnetospirillum</taxon>
    </lineage>
</organism>
<reference key="1">
    <citation type="journal article" date="2005" name="DNA Res.">
        <title>Complete genome sequence of the facultative anaerobic magnetotactic bacterium Magnetospirillum sp. strain AMB-1.</title>
        <authorList>
            <person name="Matsunaga T."/>
            <person name="Okamura Y."/>
            <person name="Fukuda Y."/>
            <person name="Wahyudi A.T."/>
            <person name="Murase Y."/>
            <person name="Takeyama H."/>
        </authorList>
    </citation>
    <scope>NUCLEOTIDE SEQUENCE [LARGE SCALE GENOMIC DNA]</scope>
    <source>
        <strain>ATCC 700264 / AMB-1</strain>
    </source>
</reference>
<name>DXS_PARM1</name>
<accession>Q2W367</accession>